<gene>
    <name evidence="1" type="primary">atpE</name>
    <name evidence="1" type="synonym">atpH</name>
    <name type="ordered locus">MAE_50120</name>
</gene>
<accession>B0JWU7</accession>
<feature type="chain" id="PRO_1000184412" description="ATP synthase subunit c">
    <location>
        <begin position="1"/>
        <end position="81"/>
    </location>
</feature>
<feature type="transmembrane region" description="Helical" evidence="1">
    <location>
        <begin position="5"/>
        <end position="25"/>
    </location>
</feature>
<feature type="transmembrane region" description="Helical" evidence="1">
    <location>
        <begin position="57"/>
        <end position="77"/>
    </location>
</feature>
<feature type="site" description="Reversibly protonated during proton transport" evidence="1">
    <location>
        <position position="61"/>
    </location>
</feature>
<dbReference type="EMBL" id="AP009552">
    <property type="protein sequence ID" value="BAG04834.1"/>
    <property type="molecule type" value="Genomic_DNA"/>
</dbReference>
<dbReference type="RefSeq" id="WP_002740068.1">
    <property type="nucleotide sequence ID" value="NC_010296.1"/>
</dbReference>
<dbReference type="SMR" id="B0JWU7"/>
<dbReference type="STRING" id="449447.MAE_50120"/>
<dbReference type="PaxDb" id="449447-MAE_50120"/>
<dbReference type="EnsemblBacteria" id="BAG04834">
    <property type="protein sequence ID" value="BAG04834"/>
    <property type="gene ID" value="MAE_50120"/>
</dbReference>
<dbReference type="GeneID" id="66707683"/>
<dbReference type="KEGG" id="mar:MAE_50120"/>
<dbReference type="eggNOG" id="COG0636">
    <property type="taxonomic scope" value="Bacteria"/>
</dbReference>
<dbReference type="HOGENOM" id="CLU_148047_2_0_3"/>
<dbReference type="BioCyc" id="MAER449447:MAE_RS21750-MONOMER"/>
<dbReference type="Proteomes" id="UP000001510">
    <property type="component" value="Chromosome"/>
</dbReference>
<dbReference type="GO" id="GO:0031676">
    <property type="term" value="C:plasma membrane-derived thylakoid membrane"/>
    <property type="evidence" value="ECO:0007669"/>
    <property type="project" value="UniProtKB-SubCell"/>
</dbReference>
<dbReference type="GO" id="GO:0045259">
    <property type="term" value="C:proton-transporting ATP synthase complex"/>
    <property type="evidence" value="ECO:0007669"/>
    <property type="project" value="UniProtKB-KW"/>
</dbReference>
<dbReference type="GO" id="GO:0033177">
    <property type="term" value="C:proton-transporting two-sector ATPase complex, proton-transporting domain"/>
    <property type="evidence" value="ECO:0007669"/>
    <property type="project" value="InterPro"/>
</dbReference>
<dbReference type="GO" id="GO:0008289">
    <property type="term" value="F:lipid binding"/>
    <property type="evidence" value="ECO:0007669"/>
    <property type="project" value="UniProtKB-KW"/>
</dbReference>
<dbReference type="GO" id="GO:0046933">
    <property type="term" value="F:proton-transporting ATP synthase activity, rotational mechanism"/>
    <property type="evidence" value="ECO:0007669"/>
    <property type="project" value="UniProtKB-UniRule"/>
</dbReference>
<dbReference type="CDD" id="cd18183">
    <property type="entry name" value="ATP-synt_Fo_c_ATPH"/>
    <property type="match status" value="1"/>
</dbReference>
<dbReference type="FunFam" id="1.20.20.10:FF:000001">
    <property type="entry name" value="ATP synthase subunit c, chloroplastic"/>
    <property type="match status" value="1"/>
</dbReference>
<dbReference type="Gene3D" id="1.20.20.10">
    <property type="entry name" value="F1F0 ATP synthase subunit C"/>
    <property type="match status" value="1"/>
</dbReference>
<dbReference type="HAMAP" id="MF_01396">
    <property type="entry name" value="ATP_synth_c_bact"/>
    <property type="match status" value="1"/>
</dbReference>
<dbReference type="InterPro" id="IPR005953">
    <property type="entry name" value="ATP_synth_csu_bac/chlpt"/>
</dbReference>
<dbReference type="InterPro" id="IPR000454">
    <property type="entry name" value="ATP_synth_F0_csu"/>
</dbReference>
<dbReference type="InterPro" id="IPR020537">
    <property type="entry name" value="ATP_synth_F0_csu_DDCD_BS"/>
</dbReference>
<dbReference type="InterPro" id="IPR038662">
    <property type="entry name" value="ATP_synth_F0_csu_sf"/>
</dbReference>
<dbReference type="InterPro" id="IPR002379">
    <property type="entry name" value="ATPase_proteolipid_c-like_dom"/>
</dbReference>
<dbReference type="InterPro" id="IPR035921">
    <property type="entry name" value="F/V-ATP_Csub_sf"/>
</dbReference>
<dbReference type="NCBIfam" id="TIGR01260">
    <property type="entry name" value="ATP_synt_c"/>
    <property type="match status" value="1"/>
</dbReference>
<dbReference type="NCBIfam" id="NF005608">
    <property type="entry name" value="PRK07354.1"/>
    <property type="match status" value="1"/>
</dbReference>
<dbReference type="PANTHER" id="PTHR10031">
    <property type="entry name" value="ATP SYNTHASE LIPID-BINDING PROTEIN, MITOCHONDRIAL"/>
    <property type="match status" value="1"/>
</dbReference>
<dbReference type="PANTHER" id="PTHR10031:SF0">
    <property type="entry name" value="ATPASE PROTEIN 9"/>
    <property type="match status" value="1"/>
</dbReference>
<dbReference type="Pfam" id="PF00137">
    <property type="entry name" value="ATP-synt_C"/>
    <property type="match status" value="1"/>
</dbReference>
<dbReference type="PRINTS" id="PR00124">
    <property type="entry name" value="ATPASEC"/>
</dbReference>
<dbReference type="SUPFAM" id="SSF81333">
    <property type="entry name" value="F1F0 ATP synthase subunit C"/>
    <property type="match status" value="1"/>
</dbReference>
<dbReference type="PROSITE" id="PS00605">
    <property type="entry name" value="ATPASE_C"/>
    <property type="match status" value="1"/>
</dbReference>
<organism>
    <name type="scientific">Microcystis aeruginosa (strain NIES-843 / IAM M-2473)</name>
    <dbReference type="NCBI Taxonomy" id="449447"/>
    <lineage>
        <taxon>Bacteria</taxon>
        <taxon>Bacillati</taxon>
        <taxon>Cyanobacteriota</taxon>
        <taxon>Cyanophyceae</taxon>
        <taxon>Oscillatoriophycideae</taxon>
        <taxon>Chroococcales</taxon>
        <taxon>Microcystaceae</taxon>
        <taxon>Microcystis</taxon>
    </lineage>
</organism>
<proteinExistence type="inferred from homology"/>
<keyword id="KW-0066">ATP synthesis</keyword>
<keyword id="KW-0138">CF(0)</keyword>
<keyword id="KW-0375">Hydrogen ion transport</keyword>
<keyword id="KW-0406">Ion transport</keyword>
<keyword id="KW-0446">Lipid-binding</keyword>
<keyword id="KW-0472">Membrane</keyword>
<keyword id="KW-0793">Thylakoid</keyword>
<keyword id="KW-0812">Transmembrane</keyword>
<keyword id="KW-1133">Transmembrane helix</keyword>
<keyword id="KW-0813">Transport</keyword>
<reference key="1">
    <citation type="journal article" date="2007" name="DNA Res.">
        <title>Complete genomic structure of the bloom-forming toxic cyanobacterium Microcystis aeruginosa NIES-843.</title>
        <authorList>
            <person name="Kaneko T."/>
            <person name="Nakajima N."/>
            <person name="Okamoto S."/>
            <person name="Suzuki I."/>
            <person name="Tanabe Y."/>
            <person name="Tamaoki M."/>
            <person name="Nakamura Y."/>
            <person name="Kasai F."/>
            <person name="Watanabe A."/>
            <person name="Kawashima K."/>
            <person name="Kishida Y."/>
            <person name="Ono A."/>
            <person name="Shimizu Y."/>
            <person name="Takahashi C."/>
            <person name="Minami C."/>
            <person name="Fujishiro T."/>
            <person name="Kohara M."/>
            <person name="Katoh M."/>
            <person name="Nakazaki N."/>
            <person name="Nakayama S."/>
            <person name="Yamada M."/>
            <person name="Tabata S."/>
            <person name="Watanabe M.M."/>
        </authorList>
    </citation>
    <scope>NUCLEOTIDE SEQUENCE [LARGE SCALE GENOMIC DNA]</scope>
    <source>
        <strain>NIES-843 / IAM M-247</strain>
    </source>
</reference>
<comment type="function">
    <text evidence="1">F(1)F(0) ATP synthase produces ATP from ADP in the presence of a proton or sodium gradient. F-type ATPases consist of two structural domains, F(1) containing the extramembraneous catalytic core and F(0) containing the membrane proton channel, linked together by a central stalk and a peripheral stalk. During catalysis, ATP synthesis in the catalytic domain of F(1) is coupled via a rotary mechanism of the central stalk subunits to proton translocation.</text>
</comment>
<comment type="function">
    <text evidence="1">Key component of the F(0) channel; it plays a direct role in translocation across the membrane. A homomeric c-ring of between 10-14 subunits forms the central stalk rotor element with the F(1) delta and epsilon subunits.</text>
</comment>
<comment type="subunit">
    <text evidence="1">F-type ATPases have 2 components, F(1) - the catalytic core - and F(0) - the membrane proton channel. F(1) has five subunits: alpha(3), beta(3), gamma(1), delta(1), epsilon(1). F(0) has four main subunits: a(1), b(1), b'(1) and c(10-14). The alpha and beta chains form an alternating ring which encloses part of the gamma chain. F(1) is attached to F(0) by a central stalk formed by the gamma and epsilon chains, while a peripheral stalk is formed by the delta, b and b' chains.</text>
</comment>
<comment type="subcellular location">
    <subcellularLocation>
        <location evidence="1">Cellular thylakoid membrane</location>
        <topology evidence="1">Multi-pass membrane protein</topology>
    </subcellularLocation>
</comment>
<comment type="similarity">
    <text evidence="1">Belongs to the ATPase C chain family.</text>
</comment>
<sequence>MNPTVAAASVIAAALAVGLAAIGPGVGQGTASGEAVSGIARQPEAEGRIRGTLLLSLAFMESLTIYGLVIALVLLFANPFA</sequence>
<evidence type="ECO:0000255" key="1">
    <source>
        <dbReference type="HAMAP-Rule" id="MF_01396"/>
    </source>
</evidence>
<protein>
    <recommendedName>
        <fullName evidence="1">ATP synthase subunit c</fullName>
    </recommendedName>
    <alternativeName>
        <fullName evidence="1">ATP synthase F(0) sector subunit c</fullName>
    </alternativeName>
    <alternativeName>
        <fullName evidence="1">F-type ATPase subunit c</fullName>
        <shortName evidence="1">F-ATPase subunit c</shortName>
    </alternativeName>
    <alternativeName>
        <fullName evidence="1">Lipid-binding protein</fullName>
    </alternativeName>
</protein>
<name>ATPL_MICAN</name>